<name>TUSE_SALCH</name>
<reference key="1">
    <citation type="journal article" date="2005" name="Nucleic Acids Res.">
        <title>The genome sequence of Salmonella enterica serovar Choleraesuis, a highly invasive and resistant zoonotic pathogen.</title>
        <authorList>
            <person name="Chiu C.-H."/>
            <person name="Tang P."/>
            <person name="Chu C."/>
            <person name="Hu S."/>
            <person name="Bao Q."/>
            <person name="Yu J."/>
            <person name="Chou Y.-Y."/>
            <person name="Wang H.-S."/>
            <person name="Lee Y.-S."/>
        </authorList>
    </citation>
    <scope>NUCLEOTIDE SEQUENCE [LARGE SCALE GENOMIC DNA]</scope>
    <source>
        <strain>SC-B67</strain>
    </source>
</reference>
<evidence type="ECO:0000250" key="1"/>
<evidence type="ECO:0000305" key="2"/>
<organism>
    <name type="scientific">Salmonella choleraesuis (strain SC-B67)</name>
    <dbReference type="NCBI Taxonomy" id="321314"/>
    <lineage>
        <taxon>Bacteria</taxon>
        <taxon>Pseudomonadati</taxon>
        <taxon>Pseudomonadota</taxon>
        <taxon>Gammaproteobacteria</taxon>
        <taxon>Enterobacterales</taxon>
        <taxon>Enterobacteriaceae</taxon>
        <taxon>Salmonella</taxon>
    </lineage>
</organism>
<feature type="chain" id="PRO_0000234614" description="Sulfurtransferase TusE">
    <location>
        <begin position="1"/>
        <end position="109"/>
    </location>
</feature>
<feature type="active site" description="Cysteine persulfide intermediate" evidence="1">
    <location>
        <position position="108"/>
    </location>
</feature>
<gene>
    <name type="primary">tusE</name>
    <name type="ordered locus">SCH_1036</name>
</gene>
<comment type="function">
    <text evidence="1">Part of a sulfur-relay system required for 2-thiolation of 5-methylaminomethyl-2-thiouridine (mnm(5)s(2)U) at tRNA wobble positions. Could accept sulfur from TusD (By similarity).</text>
</comment>
<comment type="subunit">
    <text evidence="1">Interacts with the TusBCD complex. Interacts with MnmA (By similarity).</text>
</comment>
<comment type="subcellular location">
    <subcellularLocation>
        <location evidence="1">Cytoplasm</location>
    </subcellularLocation>
</comment>
<comment type="similarity">
    <text evidence="2">Belongs to the DsrC/TusE family.</text>
</comment>
<keyword id="KW-0963">Cytoplasm</keyword>
<keyword id="KW-0808">Transferase</keyword>
<keyword id="KW-0819">tRNA processing</keyword>
<accession>Q57QR9</accession>
<sequence length="109" mass="12274">MLIFEGKEISTDSEGYLKETTQWSEALAVAIAANEGIELSAEHWEVVRFVREFYLEFNTSPAIRMLVKAMANKFGEEKGNSRYLHRLFPKGPAKQATKIAGLPKPVKCI</sequence>
<dbReference type="EC" id="2.8.1.-"/>
<dbReference type="EMBL" id="AE017220">
    <property type="protein sequence ID" value="AAX64942.1"/>
    <property type="molecule type" value="Genomic_DNA"/>
</dbReference>
<dbReference type="RefSeq" id="WP_001539655.1">
    <property type="nucleotide sequence ID" value="NC_006905.1"/>
</dbReference>
<dbReference type="SMR" id="Q57QR9"/>
<dbReference type="KEGG" id="sec:SCH_1036"/>
<dbReference type="HOGENOM" id="CLU_153199_1_0_6"/>
<dbReference type="Proteomes" id="UP000000538">
    <property type="component" value="Chromosome"/>
</dbReference>
<dbReference type="GO" id="GO:0005737">
    <property type="term" value="C:cytoplasm"/>
    <property type="evidence" value="ECO:0007669"/>
    <property type="project" value="UniProtKB-SubCell"/>
</dbReference>
<dbReference type="GO" id="GO:0097163">
    <property type="term" value="F:sulfur carrier activity"/>
    <property type="evidence" value="ECO:0007669"/>
    <property type="project" value="TreeGrafter"/>
</dbReference>
<dbReference type="GO" id="GO:0016740">
    <property type="term" value="F:transferase activity"/>
    <property type="evidence" value="ECO:0007669"/>
    <property type="project" value="UniProtKB-KW"/>
</dbReference>
<dbReference type="GO" id="GO:0002143">
    <property type="term" value="P:tRNA wobble position uridine thiolation"/>
    <property type="evidence" value="ECO:0007669"/>
    <property type="project" value="TreeGrafter"/>
</dbReference>
<dbReference type="FunFam" id="1.10.10.370:FF:000001">
    <property type="entry name" value="Sulfurtransferase"/>
    <property type="match status" value="1"/>
</dbReference>
<dbReference type="FunFam" id="3.30.1420.10:FF:000001">
    <property type="entry name" value="Sulfurtransferase"/>
    <property type="match status" value="1"/>
</dbReference>
<dbReference type="Gene3D" id="3.30.1420.10">
    <property type="match status" value="1"/>
</dbReference>
<dbReference type="Gene3D" id="1.10.10.370">
    <property type="entry name" value="DsrC-like protein, C-terminal domain"/>
    <property type="match status" value="1"/>
</dbReference>
<dbReference type="InterPro" id="IPR042072">
    <property type="entry name" value="DsrC-like_C"/>
</dbReference>
<dbReference type="InterPro" id="IPR025526">
    <property type="entry name" value="DsrC-like_dom_sf"/>
</dbReference>
<dbReference type="InterPro" id="IPR043163">
    <property type="entry name" value="DsrC-like_N"/>
</dbReference>
<dbReference type="InterPro" id="IPR007453">
    <property type="entry name" value="DsrC/TusE"/>
</dbReference>
<dbReference type="NCBIfam" id="TIGR03342">
    <property type="entry name" value="dsrC_tusE_dsvC"/>
    <property type="match status" value="1"/>
</dbReference>
<dbReference type="NCBIfam" id="NF008562">
    <property type="entry name" value="PRK11508.1"/>
    <property type="match status" value="1"/>
</dbReference>
<dbReference type="PANTHER" id="PTHR37010">
    <property type="entry name" value="SULFURTRANSFERASE TUSE"/>
    <property type="match status" value="1"/>
</dbReference>
<dbReference type="PANTHER" id="PTHR37010:SF1">
    <property type="entry name" value="SULFURTRANSFERASE TUSE"/>
    <property type="match status" value="1"/>
</dbReference>
<dbReference type="Pfam" id="PF04358">
    <property type="entry name" value="DsrC"/>
    <property type="match status" value="1"/>
</dbReference>
<dbReference type="PIRSF" id="PIRSF006223">
    <property type="entry name" value="DsrC_TusE"/>
    <property type="match status" value="1"/>
</dbReference>
<dbReference type="SUPFAM" id="SSF69721">
    <property type="entry name" value="DsrC, the gamma subunit of dissimilatory sulfite reductase"/>
    <property type="match status" value="1"/>
</dbReference>
<protein>
    <recommendedName>
        <fullName>Sulfurtransferase TusE</fullName>
        <ecNumber>2.8.1.-</ecNumber>
    </recommendedName>
    <alternativeName>
        <fullName>tRNA 2-thiouridine synthesizing protein E</fullName>
    </alternativeName>
</protein>
<proteinExistence type="inferred from homology"/>